<feature type="chain" id="PRO_0000197570" description="Recombinase Flp protein">
    <location>
        <begin position="1"/>
        <end position="568"/>
    </location>
</feature>
<feature type="domain" description="Tyr recombinase Flp-type" evidence="1">
    <location>
        <begin position="132"/>
        <end position="420"/>
    </location>
</feature>
<feature type="region of interest" description="Disordered" evidence="2">
    <location>
        <begin position="442"/>
        <end position="517"/>
    </location>
</feature>
<feature type="region of interest" description="Disordered" evidence="2">
    <location>
        <begin position="529"/>
        <end position="568"/>
    </location>
</feature>
<feature type="compositionally biased region" description="Low complexity" evidence="2">
    <location>
        <begin position="444"/>
        <end position="455"/>
    </location>
</feature>
<feature type="compositionally biased region" description="Basic and acidic residues" evidence="2">
    <location>
        <begin position="470"/>
        <end position="491"/>
    </location>
</feature>
<feature type="active site" description="O-(3'-phospho-DNA)-tyrosine intermediate" evidence="1">
    <location>
        <position position="339"/>
    </location>
</feature>
<name>FLP_ZYGBI</name>
<geneLocation type="plasmid">
    <name>pSB3</name>
</geneLocation>
<protein>
    <recommendedName>
        <fullName>Recombinase Flp protein</fullName>
    </recommendedName>
</protein>
<accession>P13784</accession>
<comment type="function">
    <text>Catalyzes the recombination between the large inverted repetitions of the plasmid.</text>
</comment>
<comment type="similarity">
    <text evidence="3">Belongs to the 'phage' integrase family.</text>
</comment>
<proteinExistence type="inferred from homology"/>
<dbReference type="EMBL" id="X02608">
    <property type="protein sequence ID" value="CAA26455.1"/>
    <property type="molecule type" value="Genomic_DNA"/>
</dbReference>
<dbReference type="PIR" id="S28089">
    <property type="entry name" value="S28089"/>
</dbReference>
<dbReference type="SMR" id="P13784"/>
<dbReference type="GO" id="GO:0003677">
    <property type="term" value="F:DNA binding"/>
    <property type="evidence" value="ECO:0007669"/>
    <property type="project" value="InterPro"/>
</dbReference>
<dbReference type="GO" id="GO:0015074">
    <property type="term" value="P:DNA integration"/>
    <property type="evidence" value="ECO:0007669"/>
    <property type="project" value="UniProtKB-KW"/>
</dbReference>
<dbReference type="GO" id="GO:0006310">
    <property type="term" value="P:DNA recombination"/>
    <property type="evidence" value="ECO:0007669"/>
    <property type="project" value="UniProtKB-KW"/>
</dbReference>
<dbReference type="CDD" id="cd00217">
    <property type="entry name" value="INT_Flp_C"/>
    <property type="match status" value="1"/>
</dbReference>
<dbReference type="Gene3D" id="1.10.443.10">
    <property type="entry name" value="Intergrase catalytic core"/>
    <property type="match status" value="1"/>
</dbReference>
<dbReference type="InterPro" id="IPR011010">
    <property type="entry name" value="DNA_brk_join_enz"/>
</dbReference>
<dbReference type="InterPro" id="IPR013762">
    <property type="entry name" value="Integrase-like_cat_sf"/>
</dbReference>
<dbReference type="InterPro" id="IPR005626">
    <property type="entry name" value="Recombinase_Flp_C"/>
</dbReference>
<dbReference type="InterPro" id="IPR022647">
    <property type="entry name" value="Recombinase_Flp_N"/>
</dbReference>
<dbReference type="Pfam" id="PF05202">
    <property type="entry name" value="Flp_C"/>
    <property type="match status" value="1"/>
</dbReference>
<dbReference type="Pfam" id="PF03930">
    <property type="entry name" value="Flp_N"/>
    <property type="match status" value="1"/>
</dbReference>
<dbReference type="SUPFAM" id="SSF56349">
    <property type="entry name" value="DNA breaking-rejoining enzymes"/>
    <property type="match status" value="1"/>
</dbReference>
<dbReference type="PROSITE" id="PS51899">
    <property type="entry name" value="TYR_RECOMBINASE_FLP"/>
    <property type="match status" value="1"/>
</dbReference>
<sequence length="568" mass="64671">MSSYMDLVDDEPATLYHKFVECLKAGENFCGDKLSGIITMAILKAIKALTEVKKTTFNKYKTTIKQGLQYDVGSSTISFVYHLKDCDELSRGLSDAFEPYKFKIKSNKEATSFKTLFRGPSFGSQKNWRKKEVDREVDNLFHSTETDESIFKFILNTLDSIETQTNTDRQKTVLTFILLMTFFNCCRNNDLMNVDPSTFKIVKNKFVGYLLQAEVKQTKTRKSRNIFFFPIRENRFDLFLALHDFFRTCQPTPKSRLSDQVSEQKWQLFRDSMVIDYNRFFRKFPASPIFAIKHGPKSHLGRHLMNSFLHKNELDSWANSLGNWSSSQNQRESGARLGYTHGGRDLPQPLFGFLAGYCVRNEEGHIVGLGLEKDINDLFDGIMDPLNEKEDTEICESYGEWAKIVSKDVLIFLKRYHSKNACRRYQNSTLYARTFLKTESVTLSGSKGSEEPSSPVRIPILSMGKASPSEGRKLRASEHANDDNEIEKIDSDSSQSEEIPIEMSDSEDETTASNISGIYLDMSKANSNVVYSPPSQTGRAAGAGRKRGVGGRRTVESKRRRVLAPINR</sequence>
<organism>
    <name type="scientific">Zygosaccharomyces bisporus</name>
    <dbReference type="NCBI Taxonomy" id="4957"/>
    <lineage>
        <taxon>Eukaryota</taxon>
        <taxon>Fungi</taxon>
        <taxon>Dikarya</taxon>
        <taxon>Ascomycota</taxon>
        <taxon>Saccharomycotina</taxon>
        <taxon>Saccharomycetes</taxon>
        <taxon>Saccharomycetales</taxon>
        <taxon>Saccharomycetaceae</taxon>
        <taxon>Zygosaccharomyces</taxon>
    </lineage>
</organism>
<reference key="1">
    <citation type="journal article" date="1985" name="Nucleic Acids Res.">
        <title>Physical and functional structure of a yeast plasmid, pSB3, isolated from Zygosaccharomyces bisporus.</title>
        <authorList>
            <person name="Toh-e A."/>
            <person name="Utatsu I."/>
        </authorList>
    </citation>
    <scope>NUCLEOTIDE SEQUENCE [GENOMIC DNA]</scope>
</reference>
<keyword id="KW-0229">DNA integration</keyword>
<keyword id="KW-0233">DNA recombination</keyword>
<keyword id="KW-0614">Plasmid</keyword>
<evidence type="ECO:0000255" key="1">
    <source>
        <dbReference type="PROSITE-ProRule" id="PRU01247"/>
    </source>
</evidence>
<evidence type="ECO:0000256" key="2">
    <source>
        <dbReference type="SAM" id="MobiDB-lite"/>
    </source>
</evidence>
<evidence type="ECO:0000305" key="3"/>
<gene>
    <name type="primary">A</name>
</gene>